<proteinExistence type="inferred from homology"/>
<protein>
    <recommendedName>
        <fullName>Transcriptional regulator MraZ</fullName>
    </recommendedName>
</protein>
<feature type="chain" id="PRO_1000062877" description="Transcriptional regulator MraZ">
    <location>
        <begin position="1"/>
        <end position="155"/>
    </location>
</feature>
<feature type="domain" description="SpoVT-AbrB 1" evidence="2">
    <location>
        <begin position="7"/>
        <end position="54"/>
    </location>
</feature>
<feature type="domain" description="SpoVT-AbrB 2" evidence="2">
    <location>
        <begin position="83"/>
        <end position="126"/>
    </location>
</feature>
<gene>
    <name evidence="1" type="primary">mraZ</name>
    <name type="ordered locus">GFO_2776</name>
</gene>
<dbReference type="EMBL" id="CU207366">
    <property type="protein sequence ID" value="CAL67730.1"/>
    <property type="molecule type" value="Genomic_DNA"/>
</dbReference>
<dbReference type="RefSeq" id="WP_011710633.1">
    <property type="nucleotide sequence ID" value="NC_008571.1"/>
</dbReference>
<dbReference type="SMR" id="A0M535"/>
<dbReference type="STRING" id="411154.GFO_2776"/>
<dbReference type="KEGG" id="gfo:GFO_2776"/>
<dbReference type="eggNOG" id="COG2001">
    <property type="taxonomic scope" value="Bacteria"/>
</dbReference>
<dbReference type="HOGENOM" id="CLU_107907_0_1_10"/>
<dbReference type="OrthoDB" id="9807753at2"/>
<dbReference type="Proteomes" id="UP000000755">
    <property type="component" value="Chromosome"/>
</dbReference>
<dbReference type="GO" id="GO:0005737">
    <property type="term" value="C:cytoplasm"/>
    <property type="evidence" value="ECO:0007669"/>
    <property type="project" value="UniProtKB-UniRule"/>
</dbReference>
<dbReference type="GO" id="GO:0009295">
    <property type="term" value="C:nucleoid"/>
    <property type="evidence" value="ECO:0007669"/>
    <property type="project" value="UniProtKB-SubCell"/>
</dbReference>
<dbReference type="GO" id="GO:0003700">
    <property type="term" value="F:DNA-binding transcription factor activity"/>
    <property type="evidence" value="ECO:0007669"/>
    <property type="project" value="UniProtKB-UniRule"/>
</dbReference>
<dbReference type="GO" id="GO:0000976">
    <property type="term" value="F:transcription cis-regulatory region binding"/>
    <property type="evidence" value="ECO:0007669"/>
    <property type="project" value="TreeGrafter"/>
</dbReference>
<dbReference type="GO" id="GO:2000143">
    <property type="term" value="P:negative regulation of DNA-templated transcription initiation"/>
    <property type="evidence" value="ECO:0007669"/>
    <property type="project" value="TreeGrafter"/>
</dbReference>
<dbReference type="CDD" id="cd16321">
    <property type="entry name" value="MraZ_C"/>
    <property type="match status" value="1"/>
</dbReference>
<dbReference type="CDD" id="cd16320">
    <property type="entry name" value="MraZ_N"/>
    <property type="match status" value="1"/>
</dbReference>
<dbReference type="Gene3D" id="3.40.1550.20">
    <property type="entry name" value="Transcriptional regulator MraZ domain"/>
    <property type="match status" value="1"/>
</dbReference>
<dbReference type="HAMAP" id="MF_01008">
    <property type="entry name" value="MraZ"/>
    <property type="match status" value="1"/>
</dbReference>
<dbReference type="InterPro" id="IPR003444">
    <property type="entry name" value="MraZ"/>
</dbReference>
<dbReference type="InterPro" id="IPR035644">
    <property type="entry name" value="MraZ_C"/>
</dbReference>
<dbReference type="InterPro" id="IPR020603">
    <property type="entry name" value="MraZ_dom"/>
</dbReference>
<dbReference type="InterPro" id="IPR035642">
    <property type="entry name" value="MraZ_N"/>
</dbReference>
<dbReference type="InterPro" id="IPR038619">
    <property type="entry name" value="MraZ_sf"/>
</dbReference>
<dbReference type="InterPro" id="IPR007159">
    <property type="entry name" value="SpoVT-AbrB_dom"/>
</dbReference>
<dbReference type="InterPro" id="IPR037914">
    <property type="entry name" value="SpoVT-AbrB_sf"/>
</dbReference>
<dbReference type="NCBIfam" id="TIGR00242">
    <property type="entry name" value="division/cell wall cluster transcriptional repressor MraZ"/>
    <property type="match status" value="1"/>
</dbReference>
<dbReference type="PANTHER" id="PTHR34701">
    <property type="entry name" value="TRANSCRIPTIONAL REGULATOR MRAZ"/>
    <property type="match status" value="1"/>
</dbReference>
<dbReference type="PANTHER" id="PTHR34701:SF1">
    <property type="entry name" value="TRANSCRIPTIONAL REGULATOR MRAZ"/>
    <property type="match status" value="1"/>
</dbReference>
<dbReference type="Pfam" id="PF02381">
    <property type="entry name" value="MraZ"/>
    <property type="match status" value="2"/>
</dbReference>
<dbReference type="SUPFAM" id="SSF89447">
    <property type="entry name" value="AbrB/MazE/MraZ-like"/>
    <property type="match status" value="1"/>
</dbReference>
<dbReference type="PROSITE" id="PS51740">
    <property type="entry name" value="SPOVT_ABRB"/>
    <property type="match status" value="2"/>
</dbReference>
<reference key="1">
    <citation type="journal article" date="2006" name="Environ. Microbiol.">
        <title>Whole genome analysis of the marine Bacteroidetes'Gramella forsetii' reveals adaptations to degradation of polymeric organic matter.</title>
        <authorList>
            <person name="Bauer M."/>
            <person name="Kube M."/>
            <person name="Teeling H."/>
            <person name="Richter M."/>
            <person name="Lombardot T."/>
            <person name="Allers E."/>
            <person name="Wuerdemann C.A."/>
            <person name="Quast C."/>
            <person name="Kuhl H."/>
            <person name="Knaust F."/>
            <person name="Woebken D."/>
            <person name="Bischof K."/>
            <person name="Mussmann M."/>
            <person name="Choudhuri J.V."/>
            <person name="Meyer F."/>
            <person name="Reinhardt R."/>
            <person name="Amann R.I."/>
            <person name="Gloeckner F.O."/>
        </authorList>
    </citation>
    <scope>NUCLEOTIDE SEQUENCE [LARGE SCALE GENOMIC DNA]</scope>
    <source>
        <strain>DSM 17595 / CGMCC 1.15422 / KT0803</strain>
    </source>
</reference>
<name>MRAZ_CHRFK</name>
<evidence type="ECO:0000255" key="1">
    <source>
        <dbReference type="HAMAP-Rule" id="MF_01008"/>
    </source>
</evidence>
<evidence type="ECO:0000255" key="2">
    <source>
        <dbReference type="PROSITE-ProRule" id="PRU01076"/>
    </source>
</evidence>
<accession>A0M535</accession>
<sequence length="155" mass="17646">MINLIGTYECKVDAKGRLMVPSALKKQLAPMMQDGFVIKRAVFQNCLELYPMEEWNVLMKRMNGLNRFKKKNNDFIRRFTAGVKTVEVDTNGRLLIPKDLVGFAGIEKEIVLSSAINIVEIWDKDKYEQTLEDSSDDFADLAEEVMGNDDFDGVS</sequence>
<keyword id="KW-0963">Cytoplasm</keyword>
<keyword id="KW-0238">DNA-binding</keyword>
<keyword id="KW-0677">Repeat</keyword>
<keyword id="KW-0804">Transcription</keyword>
<keyword id="KW-0805">Transcription regulation</keyword>
<organism>
    <name type="scientific">Christiangramia forsetii (strain DSM 17595 / CGMCC 1.15422 / KT0803)</name>
    <name type="common">Gramella forsetii</name>
    <dbReference type="NCBI Taxonomy" id="411154"/>
    <lineage>
        <taxon>Bacteria</taxon>
        <taxon>Pseudomonadati</taxon>
        <taxon>Bacteroidota</taxon>
        <taxon>Flavobacteriia</taxon>
        <taxon>Flavobacteriales</taxon>
        <taxon>Flavobacteriaceae</taxon>
        <taxon>Christiangramia</taxon>
    </lineage>
</organism>
<comment type="subunit">
    <text evidence="1">Forms oligomers.</text>
</comment>
<comment type="subcellular location">
    <subcellularLocation>
        <location evidence="1">Cytoplasm</location>
        <location evidence="1">Nucleoid</location>
    </subcellularLocation>
</comment>
<comment type="similarity">
    <text evidence="1">Belongs to the MraZ family.</text>
</comment>